<reference key="1">
    <citation type="journal article" date="2013" name="PLoS ONE">
        <title>Genomic and secretomic analyses reveal unique features of the lignocellulolytic enzyme system of Penicillium decumbens.</title>
        <authorList>
            <person name="Liu G."/>
            <person name="Zhang L."/>
            <person name="Wei X."/>
            <person name="Zou G."/>
            <person name="Qin Y."/>
            <person name="Ma L."/>
            <person name="Li J."/>
            <person name="Zheng H."/>
            <person name="Wang S."/>
            <person name="Wang C."/>
            <person name="Xun L."/>
            <person name="Zhao G.-P."/>
            <person name="Zhou Z."/>
            <person name="Qu Y."/>
        </authorList>
    </citation>
    <scope>NUCLEOTIDE SEQUENCE [LARGE SCALE GENOMIC DNA]</scope>
    <source>
        <strain>114-2 / CGMCC 5302</strain>
    </source>
</reference>
<reference key="2">
    <citation type="journal article" date="2022" name="Mar. Drugs">
        <title>Identification of PKS-NRPS Hybrid Metabolites in Marine-Derived Penicillium oxalicum.</title>
        <authorList>
            <person name="Li H."/>
            <person name="Zhang W."/>
            <person name="Zhang X."/>
            <person name="Tang S."/>
            <person name="Men P."/>
            <person name="Xiong M."/>
            <person name="Li Z."/>
            <person name="Zhang Y."/>
            <person name="Huang X."/>
            <person name="Lu X."/>
        </authorList>
    </citation>
    <scope>FUNCTION</scope>
    <scope>DISRUPTION PHENOTYPE</scope>
</reference>
<name>OPDB_PENO1</name>
<feature type="chain" id="PRO_0000457064" description="Cytochrome P450 monooxygenase opdB">
    <location>
        <begin position="1"/>
        <end position="497"/>
    </location>
</feature>
<feature type="transmembrane region" description="Helical" evidence="2">
    <location>
        <begin position="26"/>
        <end position="46"/>
    </location>
</feature>
<feature type="region of interest" description="Disordered" evidence="3">
    <location>
        <begin position="69"/>
        <end position="90"/>
    </location>
</feature>
<feature type="binding site" description="axial binding residue" evidence="1">
    <location>
        <position position="454"/>
    </location>
    <ligand>
        <name>heme</name>
        <dbReference type="ChEBI" id="CHEBI:30413"/>
    </ligand>
    <ligandPart>
        <name>Fe</name>
        <dbReference type="ChEBI" id="CHEBI:18248"/>
    </ligandPart>
</feature>
<protein>
    <recommendedName>
        <fullName evidence="5">Cytochrome P450 monooxygenase opdB</fullName>
        <ecNumber evidence="7">1.-.-.-</ecNumber>
    </recommendedName>
    <alternativeName>
        <fullName evidence="5">Oxopyrrolidines biosynthesis cluster protein B</fullName>
    </alternativeName>
</protein>
<accession>S7ZC70</accession>
<keyword id="KW-0408">Iron</keyword>
<keyword id="KW-0472">Membrane</keyword>
<keyword id="KW-0479">Metal-binding</keyword>
<keyword id="KW-0560">Oxidoreductase</keyword>
<keyword id="KW-1185">Reference proteome</keyword>
<keyword id="KW-0812">Transmembrane</keyword>
<keyword id="KW-1133">Transmembrane helix</keyword>
<sequence length="497" mass="56912">MATITLVQQFLGFGQEQEDGGMKTRYLGAMAGSVILLISAFTLSLGRRSKDFTTDQGKRITEIPGDSRMSKFTRSRELSQQGEDAAGTEPYLLQSGPYRELVISQPDQVHDFYQHDSKRHTKPRNLNLGEQFGSFLGPCVGGEYGDHWRTIRKHFEPPFAFHSVALRAPRFRREINDWLQSKAPNLRVNELDSKIDFRFLVFKLLSLHLYEDAFDDRSYWSLLELNDLYDGIITDILNSKYPDSKLFNLFCWSPKKRLREFQVKWRDFHRLVIENARGGGWACPMEVIYRGVDPQKDLTENAFLATMTEILFANVNISAEVFHTIFSNLASNPSIQTALRKEIQEWKSRLDFDLPKYLAKHDTLLNRVLMESMRISPAFWFSMPECTADAKKIGQYNIPAGTPVVIDTRRLNNDAVTWGTTGDVFNPDRFFKLPSQSLRCGFMRYGTGASSGRCLGKNVADAVFKLTMIEVVERFRLESASESQEKGREGDIRLISL</sequence>
<evidence type="ECO:0000250" key="1">
    <source>
        <dbReference type="UniProtKB" id="P04798"/>
    </source>
</evidence>
<evidence type="ECO:0000255" key="2"/>
<evidence type="ECO:0000256" key="3">
    <source>
        <dbReference type="SAM" id="MobiDB-lite"/>
    </source>
</evidence>
<evidence type="ECO:0000269" key="4">
    <source>
    </source>
</evidence>
<evidence type="ECO:0000303" key="5">
    <source>
    </source>
</evidence>
<evidence type="ECO:0000305" key="6"/>
<evidence type="ECO:0000305" key="7">
    <source>
    </source>
</evidence>
<organism>
    <name type="scientific">Penicillium oxalicum (strain 114-2 / CGMCC 5302)</name>
    <name type="common">Penicillium decumbens</name>
    <dbReference type="NCBI Taxonomy" id="933388"/>
    <lineage>
        <taxon>Eukaryota</taxon>
        <taxon>Fungi</taxon>
        <taxon>Dikarya</taxon>
        <taxon>Ascomycota</taxon>
        <taxon>Pezizomycotina</taxon>
        <taxon>Eurotiomycetes</taxon>
        <taxon>Eurotiomycetidae</taxon>
        <taxon>Eurotiales</taxon>
        <taxon>Aspergillaceae</taxon>
        <taxon>Penicillium</taxon>
    </lineage>
</organism>
<proteinExistence type="inferred from homology"/>
<comment type="function">
    <text evidence="4 6">Cytochrome P450 monooxygenase; part of the gene cluster that mediates the biosynthesis of oxopyrrolidines, polyketide-amino acid hybrid compounds with feature structures of tetramic acid (PubMed:36005526). Does not seem to play a role in oxopyrrolidines A and B biosynthesis (PubMed:36005526). May be involved in further modifications of these oxopyrrolidines (Probable).</text>
</comment>
<comment type="cofactor">
    <cofactor evidence="1">
        <name>heme</name>
        <dbReference type="ChEBI" id="CHEBI:30413"/>
    </cofactor>
</comment>
<comment type="pathway">
    <text evidence="7">Secondary metabolite biosynthesis.</text>
</comment>
<comment type="subcellular location">
    <subcellularLocation>
        <location evidence="2">Membrane</location>
        <topology evidence="2">Single-pass membrane protein</topology>
    </subcellularLocation>
</comment>
<comment type="disruption phenotype">
    <text evidence="4">Does not affect the production of oxopyrrolidines A and B.</text>
</comment>
<gene>
    <name evidence="5" type="primary">opdB</name>
    <name type="ORF">PDE_01237</name>
</gene>
<dbReference type="EC" id="1.-.-.-" evidence="7"/>
<dbReference type="EMBL" id="KB644408">
    <property type="protein sequence ID" value="EPS26301.1"/>
    <property type="molecule type" value="Genomic_DNA"/>
</dbReference>
<dbReference type="SMR" id="S7ZC70"/>
<dbReference type="STRING" id="933388.S7ZC70"/>
<dbReference type="eggNOG" id="KOG0157">
    <property type="taxonomic scope" value="Eukaryota"/>
</dbReference>
<dbReference type="HOGENOM" id="CLU_042557_0_0_1"/>
<dbReference type="OrthoDB" id="2789670at2759"/>
<dbReference type="PhylomeDB" id="S7ZC70"/>
<dbReference type="Proteomes" id="UP000019376">
    <property type="component" value="Unassembled WGS sequence"/>
</dbReference>
<dbReference type="GO" id="GO:0016020">
    <property type="term" value="C:membrane"/>
    <property type="evidence" value="ECO:0007669"/>
    <property type="project" value="UniProtKB-SubCell"/>
</dbReference>
<dbReference type="GO" id="GO:0020037">
    <property type="term" value="F:heme binding"/>
    <property type="evidence" value="ECO:0007669"/>
    <property type="project" value="InterPro"/>
</dbReference>
<dbReference type="GO" id="GO:0005506">
    <property type="term" value="F:iron ion binding"/>
    <property type="evidence" value="ECO:0007669"/>
    <property type="project" value="InterPro"/>
</dbReference>
<dbReference type="GO" id="GO:0004497">
    <property type="term" value="F:monooxygenase activity"/>
    <property type="evidence" value="ECO:0007669"/>
    <property type="project" value="InterPro"/>
</dbReference>
<dbReference type="GO" id="GO:0016705">
    <property type="term" value="F:oxidoreductase activity, acting on paired donors, with incorporation or reduction of molecular oxygen"/>
    <property type="evidence" value="ECO:0007669"/>
    <property type="project" value="InterPro"/>
</dbReference>
<dbReference type="GO" id="GO:0043386">
    <property type="term" value="P:mycotoxin biosynthetic process"/>
    <property type="evidence" value="ECO:0007669"/>
    <property type="project" value="UniProtKB-ARBA"/>
</dbReference>
<dbReference type="Gene3D" id="1.10.630.10">
    <property type="entry name" value="Cytochrome P450"/>
    <property type="match status" value="1"/>
</dbReference>
<dbReference type="InterPro" id="IPR001128">
    <property type="entry name" value="Cyt_P450"/>
</dbReference>
<dbReference type="InterPro" id="IPR036396">
    <property type="entry name" value="Cyt_P450_sf"/>
</dbReference>
<dbReference type="InterPro" id="IPR050121">
    <property type="entry name" value="Cytochrome_P450_monoxygenase"/>
</dbReference>
<dbReference type="PANTHER" id="PTHR24305">
    <property type="entry name" value="CYTOCHROME P450"/>
    <property type="match status" value="1"/>
</dbReference>
<dbReference type="PANTHER" id="PTHR24305:SF235">
    <property type="entry name" value="CYTOCHROME P450 MONOOXYGENASE APDB-RELATED"/>
    <property type="match status" value="1"/>
</dbReference>
<dbReference type="Pfam" id="PF00067">
    <property type="entry name" value="p450"/>
    <property type="match status" value="1"/>
</dbReference>
<dbReference type="SUPFAM" id="SSF48264">
    <property type="entry name" value="Cytochrome P450"/>
    <property type="match status" value="1"/>
</dbReference>